<dbReference type="EC" id="1.3.2.3"/>
<dbReference type="EMBL" id="DP000010">
    <property type="protein sequence ID" value="ABA91419.1"/>
    <property type="molecule type" value="Genomic_DNA"/>
</dbReference>
<dbReference type="EMBL" id="AP008217">
    <property type="protein sequence ID" value="BAF27569.1"/>
    <property type="status" value="ALT_INIT"/>
    <property type="molecule type" value="Genomic_DNA"/>
</dbReference>
<dbReference type="EMBL" id="AP014967">
    <property type="protein sequence ID" value="BAT12639.1"/>
    <property type="molecule type" value="Genomic_DNA"/>
</dbReference>
<dbReference type="EMBL" id="CM000148">
    <property type="protein sequence ID" value="EAZ17409.1"/>
    <property type="molecule type" value="Genomic_DNA"/>
</dbReference>
<dbReference type="EMBL" id="AK102697">
    <property type="protein sequence ID" value="BAG95677.1"/>
    <property type="molecule type" value="mRNA"/>
</dbReference>
<dbReference type="RefSeq" id="XP_015616655.1">
    <property type="nucleotide sequence ID" value="XM_015761169.1"/>
</dbReference>
<dbReference type="SMR" id="Q2RAP0"/>
<dbReference type="FunCoup" id="Q2RAP0">
    <property type="interactions" value="823"/>
</dbReference>
<dbReference type="STRING" id="39947.Q2RAP0"/>
<dbReference type="PaxDb" id="39947-Q2RAP0"/>
<dbReference type="EnsemblPlants" id="Os11t0143500-01">
    <property type="protein sequence ID" value="Os11t0143500-01"/>
    <property type="gene ID" value="Os11g0143500"/>
</dbReference>
<dbReference type="Gramene" id="Os11t0143500-01">
    <property type="protein sequence ID" value="Os11t0143500-01"/>
    <property type="gene ID" value="Os11g0143500"/>
</dbReference>
<dbReference type="KEGG" id="dosa:Os11g0143500"/>
<dbReference type="eggNOG" id="KOG4730">
    <property type="taxonomic scope" value="Eukaryota"/>
</dbReference>
<dbReference type="HOGENOM" id="CLU_021072_0_0_1"/>
<dbReference type="InParanoid" id="Q2RAP0"/>
<dbReference type="OMA" id="KQWANEW"/>
<dbReference type="OrthoDB" id="610608at2759"/>
<dbReference type="BRENDA" id="1.3.2.3">
    <property type="organism ID" value="8948"/>
</dbReference>
<dbReference type="PlantReactome" id="R-OSA-1119410">
    <property type="pathway name" value="Ascorbate biosynthesis"/>
</dbReference>
<dbReference type="UniPathway" id="UPA00132"/>
<dbReference type="Proteomes" id="UP000000763">
    <property type="component" value="Chromosome 11"/>
</dbReference>
<dbReference type="Proteomes" id="UP000007752">
    <property type="component" value="Chromosome 11"/>
</dbReference>
<dbReference type="Proteomes" id="UP000059680">
    <property type="component" value="Chromosome 11"/>
</dbReference>
<dbReference type="GO" id="GO:0031966">
    <property type="term" value="C:mitochondrial membrane"/>
    <property type="evidence" value="ECO:0007669"/>
    <property type="project" value="UniProtKB-SubCell"/>
</dbReference>
<dbReference type="GO" id="GO:0003885">
    <property type="term" value="F:D-arabinono-1,4-lactone oxidase activity"/>
    <property type="evidence" value="ECO:0007669"/>
    <property type="project" value="InterPro"/>
</dbReference>
<dbReference type="GO" id="GO:0071949">
    <property type="term" value="F:FAD binding"/>
    <property type="evidence" value="ECO:0007669"/>
    <property type="project" value="InterPro"/>
</dbReference>
<dbReference type="GO" id="GO:0016633">
    <property type="term" value="F:galactonolactone dehydrogenase activity"/>
    <property type="evidence" value="ECO:0007669"/>
    <property type="project" value="UniProtKB-EC"/>
</dbReference>
<dbReference type="GO" id="GO:0016491">
    <property type="term" value="F:oxidoreductase activity"/>
    <property type="evidence" value="ECO:0000318"/>
    <property type="project" value="GO_Central"/>
</dbReference>
<dbReference type="GO" id="GO:0019853">
    <property type="term" value="P:L-ascorbic acid biosynthetic process"/>
    <property type="evidence" value="ECO:0007669"/>
    <property type="project" value="UniProtKB-UniPathway"/>
</dbReference>
<dbReference type="Gene3D" id="3.30.465.10">
    <property type="match status" value="1"/>
</dbReference>
<dbReference type="Gene3D" id="3.30.43.10">
    <property type="entry name" value="Uridine Diphospho-n-acetylenolpyruvylglucosamine Reductase, domain 2"/>
    <property type="match status" value="1"/>
</dbReference>
<dbReference type="InterPro" id="IPR007173">
    <property type="entry name" value="ALO_C"/>
</dbReference>
<dbReference type="InterPro" id="IPR016166">
    <property type="entry name" value="FAD-bd_PCMH"/>
</dbReference>
<dbReference type="InterPro" id="IPR036318">
    <property type="entry name" value="FAD-bd_PCMH-like_sf"/>
</dbReference>
<dbReference type="InterPro" id="IPR016167">
    <property type="entry name" value="FAD-bd_PCMH_sub1"/>
</dbReference>
<dbReference type="InterPro" id="IPR016169">
    <property type="entry name" value="FAD-bd_PCMH_sub2"/>
</dbReference>
<dbReference type="InterPro" id="IPR010031">
    <property type="entry name" value="FAD_lactone_oxidase-like"/>
</dbReference>
<dbReference type="InterPro" id="IPR010029">
    <property type="entry name" value="GL_DH"/>
</dbReference>
<dbReference type="InterPro" id="IPR006094">
    <property type="entry name" value="Oxid_FAD_bind_N"/>
</dbReference>
<dbReference type="NCBIfam" id="TIGR01676">
    <property type="entry name" value="GLDHase"/>
    <property type="match status" value="1"/>
</dbReference>
<dbReference type="PANTHER" id="PTHR43762:SF1">
    <property type="entry name" value="D-ARABINONO-1,4-LACTONE OXIDASE"/>
    <property type="match status" value="1"/>
</dbReference>
<dbReference type="PANTHER" id="PTHR43762">
    <property type="entry name" value="L-GULONOLACTONE OXIDASE"/>
    <property type="match status" value="1"/>
</dbReference>
<dbReference type="Pfam" id="PF04030">
    <property type="entry name" value="ALO"/>
    <property type="match status" value="1"/>
</dbReference>
<dbReference type="Pfam" id="PF01565">
    <property type="entry name" value="FAD_binding_4"/>
    <property type="match status" value="1"/>
</dbReference>
<dbReference type="PIRSF" id="PIRSF000136">
    <property type="entry name" value="LGO_GLO"/>
    <property type="match status" value="1"/>
</dbReference>
<dbReference type="SUPFAM" id="SSF56176">
    <property type="entry name" value="FAD-binding/transporter-associated domain-like"/>
    <property type="match status" value="1"/>
</dbReference>
<dbReference type="PROSITE" id="PS51387">
    <property type="entry name" value="FAD_PCMH"/>
    <property type="match status" value="1"/>
</dbReference>
<keyword id="KW-0472">Membrane</keyword>
<keyword id="KW-0496">Mitochondrion</keyword>
<keyword id="KW-0560">Oxidoreductase</keyword>
<keyword id="KW-1185">Reference proteome</keyword>
<keyword id="KW-0809">Transit peptide</keyword>
<keyword id="KW-0812">Transmembrane</keyword>
<keyword id="KW-1133">Transmembrane helix</keyword>
<name>GLDH1_ORYSJ</name>
<protein>
    <recommendedName>
        <fullName>L-galactono-1,4-lactone dehydrogenase 1, mitochondrial</fullName>
        <ecNumber>1.3.2.3</ecNumber>
    </recommendedName>
</protein>
<evidence type="ECO:0000250" key="1"/>
<evidence type="ECO:0000255" key="2"/>
<evidence type="ECO:0000255" key="3">
    <source>
        <dbReference type="PROSITE-ProRule" id="PRU00718"/>
    </source>
</evidence>
<evidence type="ECO:0000305" key="4"/>
<comment type="function">
    <text evidence="1">Involved in the biosynthesis of ascorbic acid.</text>
</comment>
<comment type="catalytic activity">
    <reaction>
        <text>L-galactono-1,4-lactone + 4 Fe(III)-[cytochrome c] = L-dehydroascorbate + 4 Fe(II)-[cytochrome c] + 5 H(+)</text>
        <dbReference type="Rhea" id="RHEA:32367"/>
        <dbReference type="Rhea" id="RHEA-COMP:10350"/>
        <dbReference type="Rhea" id="RHEA-COMP:14399"/>
        <dbReference type="ChEBI" id="CHEBI:15378"/>
        <dbReference type="ChEBI" id="CHEBI:17464"/>
        <dbReference type="ChEBI" id="CHEBI:29033"/>
        <dbReference type="ChEBI" id="CHEBI:29034"/>
        <dbReference type="ChEBI" id="CHEBI:58539"/>
        <dbReference type="EC" id="1.3.2.3"/>
    </reaction>
</comment>
<comment type="cofactor">
    <cofactor evidence="4">
        <name>FAD</name>
        <dbReference type="ChEBI" id="CHEBI:57692"/>
    </cofactor>
</comment>
<comment type="pathway">
    <text>Cofactor biosynthesis; L-ascorbate biosynthesis.</text>
</comment>
<comment type="subcellular location">
    <subcellularLocation>
        <location evidence="4">Mitochondrion membrane</location>
        <topology evidence="4">Single-pass membrane protein</topology>
    </subcellularLocation>
</comment>
<comment type="sequence caution" evidence="4">
    <conflict type="erroneous initiation">
        <sequence resource="EMBL-CDS" id="BAF27569"/>
    </conflict>
</comment>
<sequence>MRRLLLAGILRRASSSPSSHHHLHLVRALSASSPLPASDADLRKYAGYALLLLGCGAATYYSFPLPPDALHKKAVPFKYAPLPDDLHAVSNWSATHEVHTRVLLQPDSLPALHDALAAAHGECRKLRPLGSGLSPNGLALSRAGMVNLALMDKVLGVDAKKKTVTVQAGIRVAELVDALREHGLTLQNFASIREQQVGGIIQVGAHGTGARLPPIDEQVISMKLVTPAKGTIELSREKDPDLFYLARCGLGGLGVVAEVTLQCVERHQLIEHTFVSNADEVKKNHKKWLSENKHIKYLWIPYTDTVVVVQCNPPSRWRTPKFTSKYGKDEAIQHVRDLYHESLKKYRTKAESNDPEVDQLSFTELRDRLLTLDPLDKDHVIRINKAEAEYWKKSEGYRMGWSDEILGFDCGGQQWVSETCFPAGTLAKPNMKDLDYIEELLQLIEKEDIPAPAPIEQRWTACSRSPMSPASSSQEDDIFSWVGIIMYLPTSDARQRKEITEEFFNYRSKTQTNLWDGYSAYEHWAKIEVPKDKDELAELQARLRKRFPVDAYNKARMELDPNKVLSNAKLEKLFPVTEVQHEK</sequence>
<accession>Q2RAP0</accession>
<accession>A0A0P0XYT6</accession>
<accession>Q0IUP6</accession>
<proteinExistence type="evidence at transcript level"/>
<organism>
    <name type="scientific">Oryza sativa subsp. japonica</name>
    <name type="common">Rice</name>
    <dbReference type="NCBI Taxonomy" id="39947"/>
    <lineage>
        <taxon>Eukaryota</taxon>
        <taxon>Viridiplantae</taxon>
        <taxon>Streptophyta</taxon>
        <taxon>Embryophyta</taxon>
        <taxon>Tracheophyta</taxon>
        <taxon>Spermatophyta</taxon>
        <taxon>Magnoliopsida</taxon>
        <taxon>Liliopsida</taxon>
        <taxon>Poales</taxon>
        <taxon>Poaceae</taxon>
        <taxon>BOP clade</taxon>
        <taxon>Oryzoideae</taxon>
        <taxon>Oryzeae</taxon>
        <taxon>Oryzinae</taxon>
        <taxon>Oryza</taxon>
        <taxon>Oryza sativa</taxon>
    </lineage>
</organism>
<reference key="1">
    <citation type="journal article" date="2005" name="BMC Biol.">
        <title>The sequence of rice chromosomes 11 and 12, rich in disease resistance genes and recent gene duplications.</title>
        <authorList>
            <consortium name="The rice chromosomes 11 and 12 sequencing consortia"/>
        </authorList>
    </citation>
    <scope>NUCLEOTIDE SEQUENCE [LARGE SCALE GENOMIC DNA]</scope>
    <source>
        <strain>cv. Nipponbare</strain>
    </source>
</reference>
<reference key="2">
    <citation type="journal article" date="2005" name="Nature">
        <title>The map-based sequence of the rice genome.</title>
        <authorList>
            <consortium name="International rice genome sequencing project (IRGSP)"/>
        </authorList>
    </citation>
    <scope>NUCLEOTIDE SEQUENCE [LARGE SCALE GENOMIC DNA]</scope>
    <source>
        <strain>cv. Nipponbare</strain>
    </source>
</reference>
<reference key="3">
    <citation type="journal article" date="2008" name="Nucleic Acids Res.">
        <title>The rice annotation project database (RAP-DB): 2008 update.</title>
        <authorList>
            <consortium name="The rice annotation project (RAP)"/>
        </authorList>
    </citation>
    <scope>GENOME REANNOTATION</scope>
    <source>
        <strain>cv. Nipponbare</strain>
    </source>
</reference>
<reference key="4">
    <citation type="journal article" date="2013" name="Rice">
        <title>Improvement of the Oryza sativa Nipponbare reference genome using next generation sequence and optical map data.</title>
        <authorList>
            <person name="Kawahara Y."/>
            <person name="de la Bastide M."/>
            <person name="Hamilton J.P."/>
            <person name="Kanamori H."/>
            <person name="McCombie W.R."/>
            <person name="Ouyang S."/>
            <person name="Schwartz D.C."/>
            <person name="Tanaka T."/>
            <person name="Wu J."/>
            <person name="Zhou S."/>
            <person name="Childs K.L."/>
            <person name="Davidson R.M."/>
            <person name="Lin H."/>
            <person name="Quesada-Ocampo L."/>
            <person name="Vaillancourt B."/>
            <person name="Sakai H."/>
            <person name="Lee S.S."/>
            <person name="Kim J."/>
            <person name="Numa H."/>
            <person name="Itoh T."/>
            <person name="Buell C.R."/>
            <person name="Matsumoto T."/>
        </authorList>
    </citation>
    <scope>GENOME REANNOTATION</scope>
    <source>
        <strain>cv. Nipponbare</strain>
    </source>
</reference>
<reference key="5">
    <citation type="journal article" date="2005" name="PLoS Biol.">
        <title>The genomes of Oryza sativa: a history of duplications.</title>
        <authorList>
            <person name="Yu J."/>
            <person name="Wang J."/>
            <person name="Lin W."/>
            <person name="Li S."/>
            <person name="Li H."/>
            <person name="Zhou J."/>
            <person name="Ni P."/>
            <person name="Dong W."/>
            <person name="Hu S."/>
            <person name="Zeng C."/>
            <person name="Zhang J."/>
            <person name="Zhang Y."/>
            <person name="Li R."/>
            <person name="Xu Z."/>
            <person name="Li S."/>
            <person name="Li X."/>
            <person name="Zheng H."/>
            <person name="Cong L."/>
            <person name="Lin L."/>
            <person name="Yin J."/>
            <person name="Geng J."/>
            <person name="Li G."/>
            <person name="Shi J."/>
            <person name="Liu J."/>
            <person name="Lv H."/>
            <person name="Li J."/>
            <person name="Wang J."/>
            <person name="Deng Y."/>
            <person name="Ran L."/>
            <person name="Shi X."/>
            <person name="Wang X."/>
            <person name="Wu Q."/>
            <person name="Li C."/>
            <person name="Ren X."/>
            <person name="Wang J."/>
            <person name="Wang X."/>
            <person name="Li D."/>
            <person name="Liu D."/>
            <person name="Zhang X."/>
            <person name="Ji Z."/>
            <person name="Zhao W."/>
            <person name="Sun Y."/>
            <person name="Zhang Z."/>
            <person name="Bao J."/>
            <person name="Han Y."/>
            <person name="Dong L."/>
            <person name="Ji J."/>
            <person name="Chen P."/>
            <person name="Wu S."/>
            <person name="Liu J."/>
            <person name="Xiao Y."/>
            <person name="Bu D."/>
            <person name="Tan J."/>
            <person name="Yang L."/>
            <person name="Ye C."/>
            <person name="Zhang J."/>
            <person name="Xu J."/>
            <person name="Zhou Y."/>
            <person name="Yu Y."/>
            <person name="Zhang B."/>
            <person name="Zhuang S."/>
            <person name="Wei H."/>
            <person name="Liu B."/>
            <person name="Lei M."/>
            <person name="Yu H."/>
            <person name="Li Y."/>
            <person name="Xu H."/>
            <person name="Wei S."/>
            <person name="He X."/>
            <person name="Fang L."/>
            <person name="Zhang Z."/>
            <person name="Zhang Y."/>
            <person name="Huang X."/>
            <person name="Su Z."/>
            <person name="Tong W."/>
            <person name="Li J."/>
            <person name="Tong Z."/>
            <person name="Li S."/>
            <person name="Ye J."/>
            <person name="Wang L."/>
            <person name="Fang L."/>
            <person name="Lei T."/>
            <person name="Chen C.-S."/>
            <person name="Chen H.-C."/>
            <person name="Xu Z."/>
            <person name="Li H."/>
            <person name="Huang H."/>
            <person name="Zhang F."/>
            <person name="Xu H."/>
            <person name="Li N."/>
            <person name="Zhao C."/>
            <person name="Li S."/>
            <person name="Dong L."/>
            <person name="Huang Y."/>
            <person name="Li L."/>
            <person name="Xi Y."/>
            <person name="Qi Q."/>
            <person name="Li W."/>
            <person name="Zhang B."/>
            <person name="Hu W."/>
            <person name="Zhang Y."/>
            <person name="Tian X."/>
            <person name="Jiao Y."/>
            <person name="Liang X."/>
            <person name="Jin J."/>
            <person name="Gao L."/>
            <person name="Zheng W."/>
            <person name="Hao B."/>
            <person name="Liu S.-M."/>
            <person name="Wang W."/>
            <person name="Yuan L."/>
            <person name="Cao M."/>
            <person name="McDermott J."/>
            <person name="Samudrala R."/>
            <person name="Wang J."/>
            <person name="Wong G.K.-S."/>
            <person name="Yang H."/>
        </authorList>
    </citation>
    <scope>NUCLEOTIDE SEQUENCE [LARGE SCALE GENOMIC DNA]</scope>
    <source>
        <strain>cv. Nipponbare</strain>
    </source>
</reference>
<reference key="6">
    <citation type="journal article" date="2003" name="Science">
        <title>Collection, mapping, and annotation of over 28,000 cDNA clones from japonica rice.</title>
        <authorList>
            <consortium name="The rice full-length cDNA consortium"/>
        </authorList>
    </citation>
    <scope>NUCLEOTIDE SEQUENCE [LARGE SCALE MRNA]</scope>
    <source>
        <strain>cv. Nipponbare</strain>
    </source>
</reference>
<gene>
    <name type="primary">GLDH1</name>
    <name type="ordered locus">Os11g0143500</name>
    <name type="ordered locus">LOC_Os11g04740</name>
    <name type="ORF">OsJ_32931</name>
</gene>
<feature type="transit peptide" description="Mitochondrion" evidence="2">
    <location>
        <begin position="1"/>
        <end position="36"/>
    </location>
</feature>
<feature type="propeptide" id="PRO_0000372085" description="Removed in mature form" evidence="1">
    <location>
        <begin position="37"/>
        <end position="78"/>
    </location>
</feature>
<feature type="chain" id="PRO_0000372086" description="L-galactono-1,4-lactone dehydrogenase 1, mitochondrial">
    <location>
        <begin position="79"/>
        <end position="583"/>
    </location>
</feature>
<feature type="transmembrane region" description="Helical" evidence="2">
    <location>
        <begin position="45"/>
        <end position="61"/>
    </location>
</feature>
<feature type="domain" description="FAD-binding PCMH-type" evidence="3">
    <location>
        <begin position="95"/>
        <end position="266"/>
    </location>
</feature>